<keyword id="KW-0963">Cytoplasm</keyword>
<keyword id="KW-1185">Reference proteome</keyword>
<keyword id="KW-0690">Ribosome biogenesis</keyword>
<sequence>MNKTRISRVGEEIKKELSLVLQRGLKDPRVGFVTVTDVEVSSDLQLAKVFVSIFGSEEERKASLAGLTKAKGYLRTEIGKRVKLRHIPDFVFKLDESIDYGSKIESILREISTEGEKQDES</sequence>
<organism>
    <name type="scientific">Brevibacillus brevis (strain 47 / JCM 6285 / NBRC 100599)</name>
    <dbReference type="NCBI Taxonomy" id="358681"/>
    <lineage>
        <taxon>Bacteria</taxon>
        <taxon>Bacillati</taxon>
        <taxon>Bacillota</taxon>
        <taxon>Bacilli</taxon>
        <taxon>Bacillales</taxon>
        <taxon>Paenibacillaceae</taxon>
        <taxon>Brevibacillus</taxon>
    </lineage>
</organism>
<proteinExistence type="inferred from homology"/>
<evidence type="ECO:0000255" key="1">
    <source>
        <dbReference type="HAMAP-Rule" id="MF_00003"/>
    </source>
</evidence>
<dbReference type="EMBL" id="AP008955">
    <property type="protein sequence ID" value="BAH44408.1"/>
    <property type="molecule type" value="Genomic_DNA"/>
</dbReference>
<dbReference type="RefSeq" id="WP_007719226.1">
    <property type="nucleotide sequence ID" value="NC_012491.1"/>
</dbReference>
<dbReference type="SMR" id="C0ZF49"/>
<dbReference type="STRING" id="358681.BBR47_34310"/>
<dbReference type="GeneID" id="95752348"/>
<dbReference type="KEGG" id="bbe:BBR47_34310"/>
<dbReference type="eggNOG" id="COG0858">
    <property type="taxonomic scope" value="Bacteria"/>
</dbReference>
<dbReference type="HOGENOM" id="CLU_089475_6_3_9"/>
<dbReference type="Proteomes" id="UP000001877">
    <property type="component" value="Chromosome"/>
</dbReference>
<dbReference type="GO" id="GO:0005829">
    <property type="term" value="C:cytosol"/>
    <property type="evidence" value="ECO:0007669"/>
    <property type="project" value="TreeGrafter"/>
</dbReference>
<dbReference type="GO" id="GO:0043024">
    <property type="term" value="F:ribosomal small subunit binding"/>
    <property type="evidence" value="ECO:0007669"/>
    <property type="project" value="TreeGrafter"/>
</dbReference>
<dbReference type="GO" id="GO:0030490">
    <property type="term" value="P:maturation of SSU-rRNA"/>
    <property type="evidence" value="ECO:0007669"/>
    <property type="project" value="UniProtKB-UniRule"/>
</dbReference>
<dbReference type="Gene3D" id="3.30.300.20">
    <property type="match status" value="1"/>
</dbReference>
<dbReference type="HAMAP" id="MF_00003">
    <property type="entry name" value="RbfA"/>
    <property type="match status" value="1"/>
</dbReference>
<dbReference type="InterPro" id="IPR015946">
    <property type="entry name" value="KH_dom-like_a/b"/>
</dbReference>
<dbReference type="InterPro" id="IPR000238">
    <property type="entry name" value="RbfA"/>
</dbReference>
<dbReference type="InterPro" id="IPR023799">
    <property type="entry name" value="RbfA_dom_sf"/>
</dbReference>
<dbReference type="InterPro" id="IPR020053">
    <property type="entry name" value="Ribosome-bd_factorA_CS"/>
</dbReference>
<dbReference type="NCBIfam" id="TIGR00082">
    <property type="entry name" value="rbfA"/>
    <property type="match status" value="1"/>
</dbReference>
<dbReference type="PANTHER" id="PTHR33515">
    <property type="entry name" value="RIBOSOME-BINDING FACTOR A, CHLOROPLASTIC-RELATED"/>
    <property type="match status" value="1"/>
</dbReference>
<dbReference type="PANTHER" id="PTHR33515:SF1">
    <property type="entry name" value="RIBOSOME-BINDING FACTOR A, CHLOROPLASTIC-RELATED"/>
    <property type="match status" value="1"/>
</dbReference>
<dbReference type="Pfam" id="PF02033">
    <property type="entry name" value="RBFA"/>
    <property type="match status" value="1"/>
</dbReference>
<dbReference type="SUPFAM" id="SSF89919">
    <property type="entry name" value="Ribosome-binding factor A, RbfA"/>
    <property type="match status" value="1"/>
</dbReference>
<dbReference type="PROSITE" id="PS01319">
    <property type="entry name" value="RBFA"/>
    <property type="match status" value="1"/>
</dbReference>
<name>RBFA_BREBN</name>
<protein>
    <recommendedName>
        <fullName evidence="1">Ribosome-binding factor A</fullName>
    </recommendedName>
</protein>
<comment type="function">
    <text evidence="1">One of several proteins that assist in the late maturation steps of the functional core of the 30S ribosomal subunit. Associates with free 30S ribosomal subunits (but not with 30S subunits that are part of 70S ribosomes or polysomes). Required for efficient processing of 16S rRNA. May interact with the 5'-terminal helix region of 16S rRNA.</text>
</comment>
<comment type="subunit">
    <text evidence="1">Monomer. Binds 30S ribosomal subunits, but not 50S ribosomal subunits or 70S ribosomes.</text>
</comment>
<comment type="subcellular location">
    <subcellularLocation>
        <location evidence="1">Cytoplasm</location>
    </subcellularLocation>
</comment>
<comment type="similarity">
    <text evidence="1">Belongs to the RbfA family.</text>
</comment>
<feature type="chain" id="PRO_1000193235" description="Ribosome-binding factor A">
    <location>
        <begin position="1"/>
        <end position="121"/>
    </location>
</feature>
<reference key="1">
    <citation type="submission" date="2005-03" db="EMBL/GenBank/DDBJ databases">
        <title>Brevibacillus brevis strain 47, complete genome.</title>
        <authorList>
            <person name="Hosoyama A."/>
            <person name="Yamada R."/>
            <person name="Hongo Y."/>
            <person name="Terui Y."/>
            <person name="Ankai A."/>
            <person name="Masuyama W."/>
            <person name="Sekiguchi M."/>
            <person name="Takeda T."/>
            <person name="Asano K."/>
            <person name="Ohji S."/>
            <person name="Ichikawa N."/>
            <person name="Narita S."/>
            <person name="Aoki N."/>
            <person name="Miura H."/>
            <person name="Matsushita S."/>
            <person name="Sekigawa T."/>
            <person name="Yamagata H."/>
            <person name="Yoshikawa H."/>
            <person name="Udaka S."/>
            <person name="Tanikawa S."/>
            <person name="Fujita N."/>
        </authorList>
    </citation>
    <scope>NUCLEOTIDE SEQUENCE [LARGE SCALE GENOMIC DNA]</scope>
    <source>
        <strain>47 / JCM 6285 / NBRC 100599</strain>
    </source>
</reference>
<gene>
    <name evidence="1" type="primary">rbfA</name>
    <name type="ordered locus">BBR47_34310</name>
</gene>
<accession>C0ZF49</accession>